<accession>Q0WPN7</accession>
<accession>Q8LAU7</accession>
<accession>Q9FH88</accession>
<evidence type="ECO:0000255" key="1"/>
<evidence type="ECO:0000255" key="2">
    <source>
        <dbReference type="PROSITE-ProRule" id="PRU00498"/>
    </source>
</evidence>
<evidence type="ECO:0000269" key="3">
    <source>
    </source>
</evidence>
<evidence type="ECO:0000269" key="4">
    <source>
    </source>
</evidence>
<evidence type="ECO:0000269" key="5">
    <source>
    </source>
</evidence>
<evidence type="ECO:0000303" key="6">
    <source>
    </source>
</evidence>
<evidence type="ECO:0000303" key="7">
    <source>
    </source>
</evidence>
<evidence type="ECO:0000305" key="8"/>
<evidence type="ECO:0000305" key="9">
    <source>
    </source>
</evidence>
<evidence type="ECO:0000305" key="10">
    <source>
    </source>
</evidence>
<evidence type="ECO:0000312" key="11">
    <source>
        <dbReference type="Araport" id="AT5G65810"/>
    </source>
</evidence>
<evidence type="ECO:0000312" key="12">
    <source>
        <dbReference type="EMBL" id="BAB09049.1"/>
    </source>
</evidence>
<feature type="chain" id="PRO_0000444196" description="Probable pectin methylesterase CGR3">
    <location>
        <begin position="1"/>
        <end position="258"/>
    </location>
</feature>
<feature type="topological domain" description="Cytoplasmic" evidence="9">
    <location>
        <begin position="1"/>
        <end position="29"/>
    </location>
</feature>
<feature type="transmembrane region" description="Helical" evidence="1">
    <location>
        <begin position="30"/>
        <end position="50"/>
    </location>
</feature>
<feature type="topological domain" description="Lumenal" evidence="9">
    <location>
        <begin position="51"/>
        <end position="258"/>
    </location>
</feature>
<feature type="glycosylation site" description="N-linked (GlcNAc...) asparagine" evidence="2">
    <location>
        <position position="171"/>
    </location>
</feature>
<feature type="sequence conflict" description="In Ref. 5; AAM65141." evidence="8" ref="5">
    <original>G</original>
    <variation>A</variation>
    <location>
        <position position="200"/>
    </location>
</feature>
<proteinExistence type="evidence at transcript level"/>
<reference key="1">
    <citation type="journal article" date="2000" name="DNA Res.">
        <title>Structural analysis of Arabidopsis thaliana chromosome 5. X. Sequence features of the regions of 3,076,755 bp covered by sixty P1 and TAC clones.</title>
        <authorList>
            <person name="Sato S."/>
            <person name="Nakamura Y."/>
            <person name="Kaneko T."/>
            <person name="Katoh T."/>
            <person name="Asamizu E."/>
            <person name="Kotani H."/>
            <person name="Tabata S."/>
        </authorList>
    </citation>
    <scope>NUCLEOTIDE SEQUENCE [LARGE SCALE GENOMIC DNA]</scope>
    <source>
        <strain>cv. Columbia</strain>
    </source>
</reference>
<reference key="2">
    <citation type="journal article" date="2017" name="Plant J.">
        <title>Araport11: a complete reannotation of the Arabidopsis thaliana reference genome.</title>
        <authorList>
            <person name="Cheng C.Y."/>
            <person name="Krishnakumar V."/>
            <person name="Chan A.P."/>
            <person name="Thibaud-Nissen F."/>
            <person name="Schobel S."/>
            <person name="Town C.D."/>
        </authorList>
    </citation>
    <scope>GENOME REANNOTATION</scope>
    <source>
        <strain>cv. Columbia</strain>
    </source>
</reference>
<reference key="3">
    <citation type="submission" date="2006-07" db="EMBL/GenBank/DDBJ databases">
        <title>Large-scale analysis of RIKEN Arabidopsis full-length (RAFL) cDNAs.</title>
        <authorList>
            <person name="Totoki Y."/>
            <person name="Seki M."/>
            <person name="Ishida J."/>
            <person name="Nakajima M."/>
            <person name="Enju A."/>
            <person name="Kamiya A."/>
            <person name="Narusaka M."/>
            <person name="Shin-i T."/>
            <person name="Nakagawa M."/>
            <person name="Sakamoto N."/>
            <person name="Oishi K."/>
            <person name="Kohara Y."/>
            <person name="Kobayashi M."/>
            <person name="Toyoda A."/>
            <person name="Sakaki Y."/>
            <person name="Sakurai T."/>
            <person name="Iida K."/>
            <person name="Akiyama K."/>
            <person name="Satou M."/>
            <person name="Toyoda T."/>
            <person name="Konagaya A."/>
            <person name="Carninci P."/>
            <person name="Kawai J."/>
            <person name="Hayashizaki Y."/>
            <person name="Shinozaki K."/>
        </authorList>
    </citation>
    <scope>NUCLEOTIDE SEQUENCE [LARGE SCALE MRNA]</scope>
    <source>
        <strain>cv. Columbia</strain>
    </source>
</reference>
<reference key="4">
    <citation type="submission" date="2008-07" db="EMBL/GenBank/DDBJ databases">
        <title>Arabidopsis ORF clones.</title>
        <authorList>
            <person name="de los Reyes C."/>
            <person name="Quan R."/>
            <person name="Chen H."/>
            <person name="Bautista V."/>
            <person name="Kim C.J."/>
            <person name="Ecker J.R."/>
        </authorList>
    </citation>
    <scope>NUCLEOTIDE SEQUENCE [LARGE SCALE MRNA]</scope>
    <source>
        <strain>cv. Columbia</strain>
    </source>
</reference>
<reference key="5">
    <citation type="submission" date="2002-03" db="EMBL/GenBank/DDBJ databases">
        <title>Full-length cDNA from Arabidopsis thaliana.</title>
        <authorList>
            <person name="Brover V.V."/>
            <person name="Troukhan M.E."/>
            <person name="Alexandrov N.A."/>
            <person name="Lu Y.-P."/>
            <person name="Flavell R.B."/>
            <person name="Feldmann K.A."/>
        </authorList>
    </citation>
    <scope>NUCLEOTIDE SEQUENCE [LARGE SCALE MRNA]</scope>
</reference>
<reference key="6">
    <citation type="journal article" date="2011" name="Mol. Plant">
        <title>CGR3: a Golgi-localized protein influencing homogalacturonan methylesterification.</title>
        <authorList>
            <person name="Held M.A."/>
            <person name="Be E."/>
            <person name="Zemelis S."/>
            <person name="Withers S."/>
            <person name="Wilkerson C."/>
            <person name="Brandizzi F."/>
        </authorList>
    </citation>
    <scope>FUNCTION</scope>
    <scope>DISRUPTION PHENOTYPE</scope>
    <scope>SUBCELLULAR LOCATION</scope>
    <source>
        <strain>cv. Columbia</strain>
    </source>
</reference>
<reference key="7">
    <citation type="journal article" date="2015" name="Plant J.">
        <title>CGR2 and CGR3 have critical overlapping roles in pectin methylesterification and plant growth in Arabidopsis thaliana.</title>
        <authorList>
            <person name="Kim S.-J."/>
            <person name="Held M.A."/>
            <person name="Zemelis S."/>
            <person name="Wilkerson C."/>
            <person name="Brandizzi F."/>
        </authorList>
    </citation>
    <scope>FUNCTION</scope>
    <scope>DISRUPTION PHENOTYPE</scope>
    <scope>SUBCELLULAR LOCATION</scope>
    <source>
        <strain>cv. Columbia</strain>
    </source>
</reference>
<reference key="8">
    <citation type="journal article" date="2016" name="Plant Physiol.">
        <title>Pectin Methylesterification Impacts the Relationship between Photosynthesis and Plant Growth.</title>
        <authorList>
            <person name="Weraduwage S.M."/>
            <person name="Kim S.-J."/>
            <person name="Renna L."/>
            <person name="Anozie F.C."/>
            <person name="Sharkey T.D."/>
            <person name="Brandizzi F."/>
        </authorList>
    </citation>
    <scope>FUNCTION</scope>
    <scope>DISRUPTION PHENOTYPE</scope>
    <source>
        <strain>cv. Columbia</strain>
    </source>
</reference>
<sequence length="258" mass="28296">MSRRQVRRVGDSGSFPFVGALHSKSRSSPLLSVCLVLVGACLLIGYAYSGPGMFKSIREVSKITGDYSCTAEVQRAIPILKSAYGDSMRKVLHVGPETCSVVSSLLNEEETEAWGVEPYDVEDADSNCKSLLHKGLVRVADIKFPLPYRSKSFSLVIVSDALDYLSPRYLNKTVPELARVASDGVVLLAGNPGQQKAKGGELSKFGRPAKMRSSSWWIRFFSQTNLEENEAASKKFEQAASKSSYKPACQVFHLKPLH</sequence>
<protein>
    <recommendedName>
        <fullName evidence="7">Probable pectin methylesterase CGR3</fullName>
        <ecNumber evidence="10">2.1.1.-</ecNumber>
    </recommendedName>
    <alternativeName>
        <fullName evidence="6">Cotton Golgi-related 3</fullName>
    </alternativeName>
</protein>
<keyword id="KW-0961">Cell wall biogenesis/degradation</keyword>
<keyword id="KW-0325">Glycoprotein</keyword>
<keyword id="KW-0333">Golgi apparatus</keyword>
<keyword id="KW-0472">Membrane</keyword>
<keyword id="KW-0489">Methyltransferase</keyword>
<keyword id="KW-1185">Reference proteome</keyword>
<keyword id="KW-0808">Transferase</keyword>
<keyword id="KW-0812">Transmembrane</keyword>
<keyword id="KW-1133">Transmembrane helix</keyword>
<dbReference type="EC" id="2.1.1.-" evidence="10"/>
<dbReference type="EMBL" id="AB020743">
    <property type="protein sequence ID" value="BAB09049.1"/>
    <property type="status" value="ALT_SEQ"/>
    <property type="molecule type" value="Genomic_DNA"/>
</dbReference>
<dbReference type="EMBL" id="CP002688">
    <property type="protein sequence ID" value="AED98110.1"/>
    <property type="molecule type" value="Genomic_DNA"/>
</dbReference>
<dbReference type="EMBL" id="AK229026">
    <property type="protein sequence ID" value="BAF00912.1"/>
    <property type="molecule type" value="mRNA"/>
</dbReference>
<dbReference type="EMBL" id="BT033154">
    <property type="protein sequence ID" value="ACF75543.1"/>
    <property type="molecule type" value="mRNA"/>
</dbReference>
<dbReference type="EMBL" id="AY087599">
    <property type="protein sequence ID" value="AAM65141.1"/>
    <property type="molecule type" value="mRNA"/>
</dbReference>
<dbReference type="RefSeq" id="NP_569020.1">
    <property type="nucleotide sequence ID" value="NM_125978.4"/>
</dbReference>
<dbReference type="FunCoup" id="Q0WPN7">
    <property type="interactions" value="1249"/>
</dbReference>
<dbReference type="STRING" id="3702.Q0WPN7"/>
<dbReference type="GlyCosmos" id="Q0WPN7">
    <property type="glycosylation" value="1 site, No reported glycans"/>
</dbReference>
<dbReference type="GlyGen" id="Q0WPN7">
    <property type="glycosylation" value="1 site"/>
</dbReference>
<dbReference type="iPTMnet" id="Q0WPN7"/>
<dbReference type="PaxDb" id="3702-AT5G65810.1"/>
<dbReference type="ProteomicsDB" id="241233"/>
<dbReference type="EnsemblPlants" id="AT5G65810.1">
    <property type="protein sequence ID" value="AT5G65810.1"/>
    <property type="gene ID" value="AT5G65810"/>
</dbReference>
<dbReference type="GeneID" id="836710"/>
<dbReference type="Gramene" id="AT5G65810.1">
    <property type="protein sequence ID" value="AT5G65810.1"/>
    <property type="gene ID" value="AT5G65810"/>
</dbReference>
<dbReference type="KEGG" id="ath:AT5G65810"/>
<dbReference type="Araport" id="AT5G65810"/>
<dbReference type="TAIR" id="AT5G65810">
    <property type="gene designation" value="CGR3"/>
</dbReference>
<dbReference type="eggNOG" id="ENOG502QR9D">
    <property type="taxonomic scope" value="Eukaryota"/>
</dbReference>
<dbReference type="HOGENOM" id="CLU_071215_0_0_1"/>
<dbReference type="InParanoid" id="Q0WPN7"/>
<dbReference type="OMA" id="WWIRFFS"/>
<dbReference type="PhylomeDB" id="Q0WPN7"/>
<dbReference type="PRO" id="PR:Q0WPN7"/>
<dbReference type="Proteomes" id="UP000006548">
    <property type="component" value="Chromosome 5"/>
</dbReference>
<dbReference type="ExpressionAtlas" id="Q0WPN7">
    <property type="expression patterns" value="baseline and differential"/>
</dbReference>
<dbReference type="GO" id="GO:0005768">
    <property type="term" value="C:endosome"/>
    <property type="evidence" value="ECO:0007005"/>
    <property type="project" value="TAIR"/>
</dbReference>
<dbReference type="GO" id="GO:0005794">
    <property type="term" value="C:Golgi apparatus"/>
    <property type="evidence" value="ECO:0000314"/>
    <property type="project" value="TAIR"/>
</dbReference>
<dbReference type="GO" id="GO:0000139">
    <property type="term" value="C:Golgi membrane"/>
    <property type="evidence" value="ECO:0000314"/>
    <property type="project" value="TAIR"/>
</dbReference>
<dbReference type="GO" id="GO:0005802">
    <property type="term" value="C:trans-Golgi network"/>
    <property type="evidence" value="ECO:0007005"/>
    <property type="project" value="TAIR"/>
</dbReference>
<dbReference type="GO" id="GO:0008168">
    <property type="term" value="F:methyltransferase activity"/>
    <property type="evidence" value="ECO:0007669"/>
    <property type="project" value="UniProtKB-KW"/>
</dbReference>
<dbReference type="GO" id="GO:0015976">
    <property type="term" value="P:carbon utilization"/>
    <property type="evidence" value="ECO:0000315"/>
    <property type="project" value="UniProtKB"/>
</dbReference>
<dbReference type="GO" id="GO:0010394">
    <property type="term" value="P:homogalacturonan metabolic process"/>
    <property type="evidence" value="ECO:0000315"/>
    <property type="project" value="TAIR"/>
</dbReference>
<dbReference type="GO" id="GO:0009965">
    <property type="term" value="P:leaf morphogenesis"/>
    <property type="evidence" value="ECO:0000315"/>
    <property type="project" value="UniProtKB"/>
</dbReference>
<dbReference type="GO" id="GO:0032259">
    <property type="term" value="P:methylation"/>
    <property type="evidence" value="ECO:0007669"/>
    <property type="project" value="UniProtKB-KW"/>
</dbReference>
<dbReference type="GO" id="GO:0045489">
    <property type="term" value="P:pectin biosynthetic process"/>
    <property type="evidence" value="ECO:0000316"/>
    <property type="project" value="TAIR"/>
</dbReference>
<dbReference type="GO" id="GO:0045488">
    <property type="term" value="P:pectin metabolic process"/>
    <property type="evidence" value="ECO:0000315"/>
    <property type="project" value="UniProtKB"/>
</dbReference>
<dbReference type="GO" id="GO:0009832">
    <property type="term" value="P:plant-type cell wall biogenesis"/>
    <property type="evidence" value="ECO:0000315"/>
    <property type="project" value="UniProtKB"/>
</dbReference>
<dbReference type="GO" id="GO:0009664">
    <property type="term" value="P:plant-type cell wall organization"/>
    <property type="evidence" value="ECO:0000315"/>
    <property type="project" value="UniProtKB"/>
</dbReference>
<dbReference type="GO" id="GO:0048639">
    <property type="term" value="P:positive regulation of developmental growth"/>
    <property type="evidence" value="ECO:0000315"/>
    <property type="project" value="UniProtKB"/>
</dbReference>
<dbReference type="GO" id="GO:1905157">
    <property type="term" value="P:positive regulation of photosynthesis"/>
    <property type="evidence" value="ECO:0000315"/>
    <property type="project" value="UniProtKB"/>
</dbReference>
<dbReference type="GO" id="GO:1903942">
    <property type="term" value="P:positive regulation of respiratory gaseous exchange"/>
    <property type="evidence" value="ECO:0000315"/>
    <property type="project" value="UniProtKB"/>
</dbReference>
<dbReference type="GO" id="GO:0051512">
    <property type="term" value="P:positive regulation of unidimensional cell growth"/>
    <property type="evidence" value="ECO:0000316"/>
    <property type="project" value="TAIR"/>
</dbReference>
<dbReference type="FunFam" id="3.40.50.150:FF:000350">
    <property type="entry name" value="Probable pectin methylesterase CGR3"/>
    <property type="match status" value="1"/>
</dbReference>
<dbReference type="Gene3D" id="3.40.50.150">
    <property type="entry name" value="Vaccinia Virus protein VP39"/>
    <property type="match status" value="1"/>
</dbReference>
<dbReference type="InterPro" id="IPR044689">
    <property type="entry name" value="CGR2/3"/>
</dbReference>
<dbReference type="InterPro" id="IPR029063">
    <property type="entry name" value="SAM-dependent_MTases_sf"/>
</dbReference>
<dbReference type="PANTHER" id="PTHR34208:SF18">
    <property type="entry name" value="PECTIN METHYLESTERASE CGR3-RELATED"/>
    <property type="match status" value="1"/>
</dbReference>
<dbReference type="PANTHER" id="PTHR34208">
    <property type="entry name" value="S-ADENOSYL-L-METHIONINE-DEPENDENT METHYLTRANSFERASE-RELATED"/>
    <property type="match status" value="1"/>
</dbReference>
<dbReference type="SUPFAM" id="SSF53335">
    <property type="entry name" value="S-adenosyl-L-methionine-dependent methyltransferases"/>
    <property type="match status" value="1"/>
</dbReference>
<name>CGR3_ARATH</name>
<gene>
    <name evidence="6" type="primary">CGR3</name>
    <name evidence="11" type="ordered locus">At5g65810</name>
    <name evidence="12" type="ORF">K22J17.2</name>
</gene>
<organism>
    <name type="scientific">Arabidopsis thaliana</name>
    <name type="common">Mouse-ear cress</name>
    <dbReference type="NCBI Taxonomy" id="3702"/>
    <lineage>
        <taxon>Eukaryota</taxon>
        <taxon>Viridiplantae</taxon>
        <taxon>Streptophyta</taxon>
        <taxon>Embryophyta</taxon>
        <taxon>Tracheophyta</taxon>
        <taxon>Spermatophyta</taxon>
        <taxon>Magnoliopsida</taxon>
        <taxon>eudicotyledons</taxon>
        <taxon>Gunneridae</taxon>
        <taxon>Pentapetalae</taxon>
        <taxon>rosids</taxon>
        <taxon>malvids</taxon>
        <taxon>Brassicales</taxon>
        <taxon>Brassicaceae</taxon>
        <taxon>Camelineae</taxon>
        <taxon>Arabidopsis</taxon>
    </lineage>
</organism>
<comment type="function">
    <text evidence="3 4 5">Together with CGR2, required for homogalacturonan pectins (HG) methylesterification in the Golgi apparatus prior to integration into cell walls, essential for general growth and development (PubMed:21422118, PubMed:25704846, PubMed:27208234). Promotes petiole elongation (PubMed:21422118). Impacts photosynthesis and respiration efficiency by influencing leaf mesophyll morphology and physiology; pectin methylesterification modulates both expansion and positioning of cells in leaves, probably by changing cell walls plasticity (PubMed:27208234).</text>
</comment>
<comment type="subcellular location">
    <subcellularLocation>
        <location evidence="3 4">Golgi apparatus membrane</location>
        <topology evidence="3 4">Single-pass membrane protein</topology>
    </subcellularLocation>
</comment>
<comment type="disruption phenotype">
    <text evidence="3 4 5">Reduced homogalacturonan pectins (HG) methylesterification in cell walls (PubMed:21422118). Plants lacking both CGR2 and CGR3 (cgr2-1 cgr3-1) exhibit severe defects in plant growth and development (e.g. shorter hypocotyl and primary root length due to reduced cell elongation, and abnormal pollen tube elongation), as well as reduced levels of pectin methylesterification associated with decreased microsomal pectin methyltransferase activity. The double mutant cgr2-1 cgr3-1 also lacks uronic acids and methyl ester (PubMed:25704846). Reduced HG methylesterification in cgr2-1 cgr3-1 double mutant results in thin but dense leaf mesophyll that limits CO(2) diffusion to chloroplasts and reduces leaf area, thus impairing photosynthesis efficiency and carbon (C) partitioning (PubMed:27208234).</text>
</comment>
<comment type="similarity">
    <text evidence="8">Belongs to the class I-like SAM-binding methyltransferase superfamily.</text>
</comment>
<comment type="sequence caution" evidence="8">
    <conflict type="erroneous gene model prediction">
        <sequence resource="EMBL-CDS" id="BAB09049"/>
    </conflict>
</comment>